<evidence type="ECO:0000250" key="1"/>
<evidence type="ECO:0000255" key="2">
    <source>
        <dbReference type="PROSITE-ProRule" id="PRU01082"/>
    </source>
</evidence>
<evidence type="ECO:0000303" key="3">
    <source>
    </source>
</evidence>
<evidence type="ECO:0000305" key="4"/>
<evidence type="ECO:0000312" key="5">
    <source>
        <dbReference type="EMBL" id="EEE59974.1"/>
    </source>
</evidence>
<sequence>MLRAVARCCGHWPPGAAAADGMLWQTELRPHAAGEFSMAAAQANLAMEDQAQVLASPAATLVGVYDGHGGADASRFLRSRLFPHVQRFEKEQGGMSTEVIRRAFGAAEEEFLQQVRQAWRQRPKMAAVGSCCLLGAISGDTLYVANLGDSRAVLGRRVVGGGVAVAERLTDEHNAASEEVRRELTALNPDDAQIVVHARGAWRVKGIIQVSRTIGDVYLKKQEYSMDPVFRNVGPPIPLKRPALSAEPSIQVRKLKPNDLFLIFASDGLWEHLSDDAAVQIVFKNPRTGIANRLVKAALKEATRKREVSFRDLKTIEKGVRRHFHDDISVIVVYLDRHRGRRHTRVVDSSSNCTNAPVDIYSSNSGQSVETLQAHRGSGW</sequence>
<proteinExistence type="evidence at transcript level"/>
<reference key="1">
    <citation type="journal article" date="2005" name="Genome Res.">
        <title>Sequence, annotation, and analysis of synteny between rice chromosome 3 and diverged grass species.</title>
        <authorList>
            <consortium name="The rice chromosome 3 sequencing consortium"/>
            <person name="Buell C.R."/>
            <person name="Yuan Q."/>
            <person name="Ouyang S."/>
            <person name="Liu J."/>
            <person name="Zhu W."/>
            <person name="Wang A."/>
            <person name="Maiti R."/>
            <person name="Haas B."/>
            <person name="Wortman J."/>
            <person name="Pertea M."/>
            <person name="Jones K.M."/>
            <person name="Kim M."/>
            <person name="Overton L."/>
            <person name="Tsitrin T."/>
            <person name="Fadrosh D."/>
            <person name="Bera J."/>
            <person name="Weaver B."/>
            <person name="Jin S."/>
            <person name="Johri S."/>
            <person name="Reardon M."/>
            <person name="Webb K."/>
            <person name="Hill J."/>
            <person name="Moffat K."/>
            <person name="Tallon L."/>
            <person name="Van Aken S."/>
            <person name="Lewis M."/>
            <person name="Utterback T."/>
            <person name="Feldblyum T."/>
            <person name="Zismann V."/>
            <person name="Iobst S."/>
            <person name="Hsiao J."/>
            <person name="de Vazeille A.R."/>
            <person name="Salzberg S.L."/>
            <person name="White O."/>
            <person name="Fraser C.M."/>
            <person name="Yu Y."/>
            <person name="Kim H."/>
            <person name="Rambo T."/>
            <person name="Currie J."/>
            <person name="Collura K."/>
            <person name="Kernodle-Thompson S."/>
            <person name="Wei F."/>
            <person name="Kudrna K."/>
            <person name="Ammiraju J.S.S."/>
            <person name="Luo M."/>
            <person name="Goicoechea J.L."/>
            <person name="Wing R.A."/>
            <person name="Henry D."/>
            <person name="Oates R."/>
            <person name="Palmer M."/>
            <person name="Pries G."/>
            <person name="Saski C."/>
            <person name="Simmons J."/>
            <person name="Soderlund C."/>
            <person name="Nelson W."/>
            <person name="de la Bastide M."/>
            <person name="Spiegel L."/>
            <person name="Nascimento L."/>
            <person name="Huang E."/>
            <person name="Preston R."/>
            <person name="Zutavern T."/>
            <person name="Palmer L."/>
            <person name="O'Shaughnessy A."/>
            <person name="Dike S."/>
            <person name="McCombie W.R."/>
            <person name="Minx P."/>
            <person name="Cordum H."/>
            <person name="Wilson R."/>
            <person name="Jin W."/>
            <person name="Lee H.R."/>
            <person name="Jiang J."/>
            <person name="Jackson S."/>
        </authorList>
    </citation>
    <scope>NUCLEOTIDE SEQUENCE [LARGE SCALE GENOMIC DNA]</scope>
    <source>
        <strain>cv. Nipponbare</strain>
    </source>
</reference>
<reference key="2">
    <citation type="journal article" date="2005" name="Nature">
        <title>The map-based sequence of the rice genome.</title>
        <authorList>
            <consortium name="International rice genome sequencing project (IRGSP)"/>
        </authorList>
    </citation>
    <scope>NUCLEOTIDE SEQUENCE [LARGE SCALE GENOMIC DNA]</scope>
    <source>
        <strain>cv. Nipponbare</strain>
    </source>
</reference>
<reference key="3">
    <citation type="journal article" date="2008" name="Nucleic Acids Res.">
        <title>The rice annotation project database (RAP-DB): 2008 update.</title>
        <authorList>
            <consortium name="The rice annotation project (RAP)"/>
        </authorList>
    </citation>
    <scope>GENOME REANNOTATION</scope>
    <source>
        <strain>cv. Nipponbare</strain>
    </source>
</reference>
<reference key="4">
    <citation type="journal article" date="2013" name="Rice">
        <title>Improvement of the Oryza sativa Nipponbare reference genome using next generation sequence and optical map data.</title>
        <authorList>
            <person name="Kawahara Y."/>
            <person name="de la Bastide M."/>
            <person name="Hamilton J.P."/>
            <person name="Kanamori H."/>
            <person name="McCombie W.R."/>
            <person name="Ouyang S."/>
            <person name="Schwartz D.C."/>
            <person name="Tanaka T."/>
            <person name="Wu J."/>
            <person name="Zhou S."/>
            <person name="Childs K.L."/>
            <person name="Davidson R.M."/>
            <person name="Lin H."/>
            <person name="Quesada-Ocampo L."/>
            <person name="Vaillancourt B."/>
            <person name="Sakai H."/>
            <person name="Lee S.S."/>
            <person name="Kim J."/>
            <person name="Numa H."/>
            <person name="Itoh T."/>
            <person name="Buell C.R."/>
            <person name="Matsumoto T."/>
        </authorList>
    </citation>
    <scope>GENOME REANNOTATION</scope>
    <source>
        <strain>cv. Nipponbare</strain>
    </source>
</reference>
<reference key="5">
    <citation type="journal article" date="2005" name="PLoS Biol.">
        <title>The genomes of Oryza sativa: a history of duplications.</title>
        <authorList>
            <person name="Yu J."/>
            <person name="Wang J."/>
            <person name="Lin W."/>
            <person name="Li S."/>
            <person name="Li H."/>
            <person name="Zhou J."/>
            <person name="Ni P."/>
            <person name="Dong W."/>
            <person name="Hu S."/>
            <person name="Zeng C."/>
            <person name="Zhang J."/>
            <person name="Zhang Y."/>
            <person name="Li R."/>
            <person name="Xu Z."/>
            <person name="Li S."/>
            <person name="Li X."/>
            <person name="Zheng H."/>
            <person name="Cong L."/>
            <person name="Lin L."/>
            <person name="Yin J."/>
            <person name="Geng J."/>
            <person name="Li G."/>
            <person name="Shi J."/>
            <person name="Liu J."/>
            <person name="Lv H."/>
            <person name="Li J."/>
            <person name="Wang J."/>
            <person name="Deng Y."/>
            <person name="Ran L."/>
            <person name="Shi X."/>
            <person name="Wang X."/>
            <person name="Wu Q."/>
            <person name="Li C."/>
            <person name="Ren X."/>
            <person name="Wang J."/>
            <person name="Wang X."/>
            <person name="Li D."/>
            <person name="Liu D."/>
            <person name="Zhang X."/>
            <person name="Ji Z."/>
            <person name="Zhao W."/>
            <person name="Sun Y."/>
            <person name="Zhang Z."/>
            <person name="Bao J."/>
            <person name="Han Y."/>
            <person name="Dong L."/>
            <person name="Ji J."/>
            <person name="Chen P."/>
            <person name="Wu S."/>
            <person name="Liu J."/>
            <person name="Xiao Y."/>
            <person name="Bu D."/>
            <person name="Tan J."/>
            <person name="Yang L."/>
            <person name="Ye C."/>
            <person name="Zhang J."/>
            <person name="Xu J."/>
            <person name="Zhou Y."/>
            <person name="Yu Y."/>
            <person name="Zhang B."/>
            <person name="Zhuang S."/>
            <person name="Wei H."/>
            <person name="Liu B."/>
            <person name="Lei M."/>
            <person name="Yu H."/>
            <person name="Li Y."/>
            <person name="Xu H."/>
            <person name="Wei S."/>
            <person name="He X."/>
            <person name="Fang L."/>
            <person name="Zhang Z."/>
            <person name="Zhang Y."/>
            <person name="Huang X."/>
            <person name="Su Z."/>
            <person name="Tong W."/>
            <person name="Li J."/>
            <person name="Tong Z."/>
            <person name="Li S."/>
            <person name="Ye J."/>
            <person name="Wang L."/>
            <person name="Fang L."/>
            <person name="Lei T."/>
            <person name="Chen C.-S."/>
            <person name="Chen H.-C."/>
            <person name="Xu Z."/>
            <person name="Li H."/>
            <person name="Huang H."/>
            <person name="Zhang F."/>
            <person name="Xu H."/>
            <person name="Li N."/>
            <person name="Zhao C."/>
            <person name="Li S."/>
            <person name="Dong L."/>
            <person name="Huang Y."/>
            <person name="Li L."/>
            <person name="Xi Y."/>
            <person name="Qi Q."/>
            <person name="Li W."/>
            <person name="Zhang B."/>
            <person name="Hu W."/>
            <person name="Zhang Y."/>
            <person name="Tian X."/>
            <person name="Jiao Y."/>
            <person name="Liang X."/>
            <person name="Jin J."/>
            <person name="Gao L."/>
            <person name="Zheng W."/>
            <person name="Hao B."/>
            <person name="Liu S.-M."/>
            <person name="Wang W."/>
            <person name="Yuan L."/>
            <person name="Cao M."/>
            <person name="McDermott J."/>
            <person name="Samudrala R."/>
            <person name="Wang J."/>
            <person name="Wong G.K.-S."/>
            <person name="Yang H."/>
        </authorList>
    </citation>
    <scope>NUCLEOTIDE SEQUENCE [LARGE SCALE GENOMIC DNA]</scope>
    <source>
        <strain>cv. Nipponbare</strain>
    </source>
</reference>
<reference key="6">
    <citation type="journal article" date="2003" name="Science">
        <title>Collection, mapping, and annotation of over 28,000 cDNA clones from japonica rice.</title>
        <authorList>
            <consortium name="The rice full-length cDNA consortium"/>
        </authorList>
    </citation>
    <scope>NUCLEOTIDE SEQUENCE [LARGE SCALE MRNA] (ISOFORMS 1 AND 2)</scope>
    <source>
        <strain>cv. Nipponbare</strain>
    </source>
</reference>
<reference key="7">
    <citation type="journal article" date="2008" name="BMC Genomics">
        <title>Genome-wide and expression analysis of protein phosphatase 2C in rice and Arabidopsis.</title>
        <authorList>
            <person name="Xue T."/>
            <person name="Wang D."/>
            <person name="Zhang S."/>
            <person name="Ehlting J."/>
            <person name="Ni F."/>
            <person name="Jacab S."/>
            <person name="Zheng C."/>
            <person name="Zhong Y."/>
        </authorList>
    </citation>
    <scope>GENE FAMILY</scope>
    <scope>NOMENCLATURE</scope>
</reference>
<keyword id="KW-0025">Alternative splicing</keyword>
<keyword id="KW-0378">Hydrolase</keyword>
<keyword id="KW-0460">Magnesium</keyword>
<keyword id="KW-0464">Manganese</keyword>
<keyword id="KW-0479">Metal-binding</keyword>
<keyword id="KW-0904">Protein phosphatase</keyword>
<keyword id="KW-1185">Reference proteome</keyword>
<gene>
    <name type="primary">BIPP2C2</name>
    <name type="ordered locus">Os03g0761100</name>
    <name type="ordered locus">LOC_Os03g55320</name>
    <name evidence="5" type="ORF">OsJ_12676</name>
    <name type="ORF">OSJNBb0048A17.8</name>
</gene>
<organism>
    <name type="scientific">Oryza sativa subsp. japonica</name>
    <name type="common">Rice</name>
    <dbReference type="NCBI Taxonomy" id="39947"/>
    <lineage>
        <taxon>Eukaryota</taxon>
        <taxon>Viridiplantae</taxon>
        <taxon>Streptophyta</taxon>
        <taxon>Embryophyta</taxon>
        <taxon>Tracheophyta</taxon>
        <taxon>Spermatophyta</taxon>
        <taxon>Magnoliopsida</taxon>
        <taxon>Liliopsida</taxon>
        <taxon>Poales</taxon>
        <taxon>Poaceae</taxon>
        <taxon>BOP clade</taxon>
        <taxon>Oryzoideae</taxon>
        <taxon>Oryzeae</taxon>
        <taxon>Oryzinae</taxon>
        <taxon>Oryza</taxon>
        <taxon>Oryza sativa</taxon>
    </lineage>
</organism>
<protein>
    <recommendedName>
        <fullName>Probable protein phosphatase 2C 34</fullName>
        <shortName>OsPP2C34</shortName>
        <ecNumber>3.1.3.16</ecNumber>
    </recommendedName>
    <alternativeName>
        <fullName>BTH-induced protein phosphatase 2C 2</fullName>
        <shortName>OsBIPP2C2</shortName>
    </alternativeName>
</protein>
<comment type="catalytic activity">
    <reaction>
        <text>O-phospho-L-seryl-[protein] + H2O = L-seryl-[protein] + phosphate</text>
        <dbReference type="Rhea" id="RHEA:20629"/>
        <dbReference type="Rhea" id="RHEA-COMP:9863"/>
        <dbReference type="Rhea" id="RHEA-COMP:11604"/>
        <dbReference type="ChEBI" id="CHEBI:15377"/>
        <dbReference type="ChEBI" id="CHEBI:29999"/>
        <dbReference type="ChEBI" id="CHEBI:43474"/>
        <dbReference type="ChEBI" id="CHEBI:83421"/>
        <dbReference type="EC" id="3.1.3.16"/>
    </reaction>
</comment>
<comment type="catalytic activity">
    <reaction>
        <text>O-phospho-L-threonyl-[protein] + H2O = L-threonyl-[protein] + phosphate</text>
        <dbReference type="Rhea" id="RHEA:47004"/>
        <dbReference type="Rhea" id="RHEA-COMP:11060"/>
        <dbReference type="Rhea" id="RHEA-COMP:11605"/>
        <dbReference type="ChEBI" id="CHEBI:15377"/>
        <dbReference type="ChEBI" id="CHEBI:30013"/>
        <dbReference type="ChEBI" id="CHEBI:43474"/>
        <dbReference type="ChEBI" id="CHEBI:61977"/>
        <dbReference type="EC" id="3.1.3.16"/>
    </reaction>
</comment>
<comment type="cofactor">
    <cofactor evidence="1">
        <name>Mg(2+)</name>
        <dbReference type="ChEBI" id="CHEBI:18420"/>
    </cofactor>
    <cofactor evidence="1">
        <name>Mn(2+)</name>
        <dbReference type="ChEBI" id="CHEBI:29035"/>
    </cofactor>
    <text evidence="1">Binds 2 magnesium or manganese ions per subunit.</text>
</comment>
<comment type="alternative products">
    <event type="alternative splicing"/>
    <isoform>
        <id>Q94H98-1</id>
        <name>1</name>
        <sequence type="displayed"/>
    </isoform>
    <isoform>
        <id>Q94H98-2</id>
        <name>2</name>
        <sequence type="described" ref="VSP_036265 VSP_036266"/>
    </isoform>
    <isoform>
        <id>Q94H98-3</id>
        <name>3</name>
        <sequence type="described" ref="VSP_036263 VSP_036264"/>
    </isoform>
</comment>
<comment type="similarity">
    <text evidence="4">Belongs to the PP2C family.</text>
</comment>
<comment type="sequence caution" evidence="4">
    <conflict type="erroneous gene model prediction">
        <sequence resource="EMBL-CDS" id="BAF13264"/>
    </conflict>
</comment>
<dbReference type="EC" id="3.1.3.16"/>
<dbReference type="EMBL" id="AC084282">
    <property type="protein sequence ID" value="AAK63942.1"/>
    <property type="molecule type" value="Genomic_DNA"/>
</dbReference>
<dbReference type="EMBL" id="DP000009">
    <property type="protein sequence ID" value="ABF99005.1"/>
    <property type="molecule type" value="Genomic_DNA"/>
</dbReference>
<dbReference type="EMBL" id="DP000009">
    <property type="protein sequence ID" value="ABF99006.1"/>
    <property type="molecule type" value="Genomic_DNA"/>
</dbReference>
<dbReference type="EMBL" id="DP000009">
    <property type="protein sequence ID" value="ABF99007.1"/>
    <property type="molecule type" value="Genomic_DNA"/>
</dbReference>
<dbReference type="EMBL" id="AP008209">
    <property type="protein sequence ID" value="BAF13264.2"/>
    <property type="status" value="ALT_SEQ"/>
    <property type="molecule type" value="Genomic_DNA"/>
</dbReference>
<dbReference type="EMBL" id="AP014959">
    <property type="protein sequence ID" value="BAS86507.1"/>
    <property type="molecule type" value="Genomic_DNA"/>
</dbReference>
<dbReference type="EMBL" id="AP014959">
    <property type="protein sequence ID" value="BAS86508.1"/>
    <property type="molecule type" value="Genomic_DNA"/>
</dbReference>
<dbReference type="EMBL" id="CM000140">
    <property type="protein sequence ID" value="EEE59974.1"/>
    <property type="molecule type" value="Genomic_DNA"/>
</dbReference>
<dbReference type="EMBL" id="AK066083">
    <property type="protein sequence ID" value="BAG89811.1"/>
    <property type="molecule type" value="mRNA"/>
</dbReference>
<dbReference type="EMBL" id="AK102620">
    <property type="protein sequence ID" value="BAG95642.1"/>
    <property type="molecule type" value="mRNA"/>
</dbReference>
<dbReference type="RefSeq" id="XP_015631940.1">
    <property type="nucleotide sequence ID" value="XM_015776454.1"/>
</dbReference>
<dbReference type="SMR" id="Q94H98"/>
<dbReference type="FunCoup" id="Q94H98">
    <property type="interactions" value="1062"/>
</dbReference>
<dbReference type="STRING" id="39947.Q94H98"/>
<dbReference type="PaxDb" id="39947-Q94H98"/>
<dbReference type="EnsemblPlants" id="Os03t0761100-01">
    <molecule id="Q94H98-1"/>
    <property type="protein sequence ID" value="Os03t0761100-01"/>
    <property type="gene ID" value="Os03g0761100"/>
</dbReference>
<dbReference type="EnsemblPlants" id="Os03t0761100-03">
    <molecule id="Q94H98-1"/>
    <property type="protein sequence ID" value="Os03t0761100-03"/>
    <property type="gene ID" value="Os03g0761100"/>
</dbReference>
<dbReference type="Gramene" id="Os03t0761100-01">
    <molecule id="Q94H98-1"/>
    <property type="protein sequence ID" value="Os03t0761100-01"/>
    <property type="gene ID" value="Os03g0761100"/>
</dbReference>
<dbReference type="Gramene" id="Os03t0761100-03">
    <molecule id="Q94H98-1"/>
    <property type="protein sequence ID" value="Os03t0761100-03"/>
    <property type="gene ID" value="Os03g0761100"/>
</dbReference>
<dbReference type="KEGG" id="dosa:Os03g0761100"/>
<dbReference type="eggNOG" id="KOG0700">
    <property type="taxonomic scope" value="Eukaryota"/>
</dbReference>
<dbReference type="HOGENOM" id="CLU_013173_2_2_1"/>
<dbReference type="InParanoid" id="Q94H98"/>
<dbReference type="OMA" id="AQANLIM"/>
<dbReference type="OrthoDB" id="420076at2759"/>
<dbReference type="Proteomes" id="UP000000763">
    <property type="component" value="Chromosome 3"/>
</dbReference>
<dbReference type="Proteomes" id="UP000007752">
    <property type="component" value="Chromosome 3"/>
</dbReference>
<dbReference type="Proteomes" id="UP000059680">
    <property type="component" value="Chromosome 3"/>
</dbReference>
<dbReference type="GO" id="GO:0046872">
    <property type="term" value="F:metal ion binding"/>
    <property type="evidence" value="ECO:0007669"/>
    <property type="project" value="UniProtKB-KW"/>
</dbReference>
<dbReference type="GO" id="GO:0004722">
    <property type="term" value="F:protein serine/threonine phosphatase activity"/>
    <property type="evidence" value="ECO:0000318"/>
    <property type="project" value="GO_Central"/>
</dbReference>
<dbReference type="GO" id="GO:1902531">
    <property type="term" value="P:regulation of intracellular signal transduction"/>
    <property type="evidence" value="ECO:0000318"/>
    <property type="project" value="GO_Central"/>
</dbReference>
<dbReference type="CDD" id="cd00143">
    <property type="entry name" value="PP2Cc"/>
    <property type="match status" value="1"/>
</dbReference>
<dbReference type="FunFam" id="3.60.40.10:FF:000052">
    <property type="entry name" value="Probable protein phosphatase 2C 34"/>
    <property type="match status" value="1"/>
</dbReference>
<dbReference type="Gene3D" id="3.60.40.10">
    <property type="entry name" value="PPM-type phosphatase domain"/>
    <property type="match status" value="1"/>
</dbReference>
<dbReference type="InterPro" id="IPR015655">
    <property type="entry name" value="PP2C"/>
</dbReference>
<dbReference type="InterPro" id="IPR000222">
    <property type="entry name" value="PP2C_BS"/>
</dbReference>
<dbReference type="InterPro" id="IPR036457">
    <property type="entry name" value="PPM-type-like_dom_sf"/>
</dbReference>
<dbReference type="InterPro" id="IPR001932">
    <property type="entry name" value="PPM-type_phosphatase-like_dom"/>
</dbReference>
<dbReference type="PANTHER" id="PTHR47992">
    <property type="entry name" value="PROTEIN PHOSPHATASE"/>
    <property type="match status" value="1"/>
</dbReference>
<dbReference type="Pfam" id="PF00481">
    <property type="entry name" value="PP2C"/>
    <property type="match status" value="1"/>
</dbReference>
<dbReference type="SMART" id="SM00332">
    <property type="entry name" value="PP2Cc"/>
    <property type="match status" value="1"/>
</dbReference>
<dbReference type="SUPFAM" id="SSF81606">
    <property type="entry name" value="PP2C-like"/>
    <property type="match status" value="1"/>
</dbReference>
<dbReference type="PROSITE" id="PS01032">
    <property type="entry name" value="PPM_1"/>
    <property type="match status" value="1"/>
</dbReference>
<dbReference type="PROSITE" id="PS51746">
    <property type="entry name" value="PPM_2"/>
    <property type="match status" value="1"/>
</dbReference>
<feature type="chain" id="PRO_0000363281" description="Probable protein phosphatase 2C 34">
    <location>
        <begin position="1"/>
        <end position="380"/>
    </location>
</feature>
<feature type="domain" description="PPM-type phosphatase" evidence="2">
    <location>
        <begin position="32"/>
        <end position="335"/>
    </location>
</feature>
<feature type="binding site" evidence="1">
    <location>
        <position position="66"/>
    </location>
    <ligand>
        <name>Mn(2+)</name>
        <dbReference type="ChEBI" id="CHEBI:29035"/>
        <label>1</label>
    </ligand>
</feature>
<feature type="binding site" evidence="1">
    <location>
        <position position="66"/>
    </location>
    <ligand>
        <name>Mn(2+)</name>
        <dbReference type="ChEBI" id="CHEBI:29035"/>
        <label>2</label>
    </ligand>
</feature>
<feature type="binding site" evidence="1">
    <location>
        <position position="67"/>
    </location>
    <ligand>
        <name>Mn(2+)</name>
        <dbReference type="ChEBI" id="CHEBI:29035"/>
        <label>1</label>
    </ligand>
</feature>
<feature type="binding site" evidence="1">
    <location>
        <position position="267"/>
    </location>
    <ligand>
        <name>Mn(2+)</name>
        <dbReference type="ChEBI" id="CHEBI:29035"/>
        <label>2</label>
    </ligand>
</feature>
<feature type="binding site" evidence="1">
    <location>
        <position position="326"/>
    </location>
    <ligand>
        <name>Mn(2+)</name>
        <dbReference type="ChEBI" id="CHEBI:29035"/>
        <label>2</label>
    </ligand>
</feature>
<feature type="splice variant" id="VSP_036263" description="In isoform 3." evidence="4">
    <original>VGPPIPLKRPALSAEPSIQVRKL</original>
    <variation>MVSGSISVTTLRCRLSSRIQGRV</variation>
    <location>
        <begin position="233"/>
        <end position="255"/>
    </location>
</feature>
<feature type="splice variant" id="VSP_036264" description="In isoform 3." evidence="4">
    <location>
        <begin position="256"/>
        <end position="380"/>
    </location>
</feature>
<feature type="splice variant" id="VSP_036265" description="In isoform 2." evidence="3">
    <original>TGIANRLVKAALKEATRKREVSFRDLKTIE</original>
    <variation>TVSSDNIYSIRSFHHREYIFPVNERGVLTQ</variation>
    <location>
        <begin position="288"/>
        <end position="317"/>
    </location>
</feature>
<feature type="splice variant" id="VSP_036266" description="In isoform 2." evidence="3">
    <location>
        <begin position="318"/>
        <end position="380"/>
    </location>
</feature>
<name>P2C34_ORYSJ</name>
<accession>Q94H98</accession>
<accession>B9F5U1</accession>
<accession>Q10EH6</accession>
<accession>Q10EH8</accession>